<feature type="chain" id="PRO_0000456733" description="Short-chain dehydrogenase/reductase GME11373">
    <location>
        <begin position="1"/>
        <end position="265"/>
    </location>
</feature>
<feature type="active site" description="Proton donor" evidence="2">
    <location>
        <position position="148"/>
    </location>
</feature>
<feature type="active site" description="Proton donor" evidence="2">
    <location>
        <position position="149"/>
    </location>
</feature>
<feature type="active site" description="Proton acceptor" evidence="3">
    <location>
        <position position="163"/>
    </location>
</feature>
<feature type="active site" description="Lowers pKa of active site Tyr" evidence="2">
    <location>
        <position position="167"/>
    </location>
</feature>
<feature type="binding site" evidence="1">
    <location>
        <position position="26"/>
    </location>
    <ligand>
        <name>NADP(+)</name>
        <dbReference type="ChEBI" id="CHEBI:58349"/>
    </ligand>
</feature>
<feature type="binding site" evidence="1">
    <location>
        <position position="72"/>
    </location>
    <ligand>
        <name>NADP(+)</name>
        <dbReference type="ChEBI" id="CHEBI:58349"/>
    </ligand>
</feature>
<feature type="binding site" evidence="2">
    <location>
        <position position="99"/>
    </location>
    <ligand>
        <name>NADP(+)</name>
        <dbReference type="ChEBI" id="CHEBI:58349"/>
    </ligand>
</feature>
<feature type="binding site" evidence="1">
    <location>
        <position position="132"/>
    </location>
    <ligand>
        <name>NADP(+)</name>
        <dbReference type="ChEBI" id="CHEBI:58349"/>
    </ligand>
</feature>
<feature type="binding site" evidence="2">
    <location>
        <position position="163"/>
    </location>
    <ligand>
        <name>NADP(+)</name>
        <dbReference type="ChEBI" id="CHEBI:58349"/>
    </ligand>
</feature>
<feature type="binding site" evidence="2">
    <location>
        <position position="167"/>
    </location>
    <ligand>
        <name>NADP(+)</name>
        <dbReference type="ChEBI" id="CHEBI:58349"/>
    </ligand>
</feature>
<feature type="binding site" evidence="1">
    <location>
        <position position="198"/>
    </location>
    <ligand>
        <name>NADP(+)</name>
        <dbReference type="ChEBI" id="CHEBI:58349"/>
    </ligand>
</feature>
<comment type="function">
    <text evidence="4 8">Short-chain dehydrogenase/reductase; part of the gene cluster that mediates the biosynthesis of dibenzodioxocinones such as pestalotiollide B, a novel class of inhibitors against cholesterol ester transfer protein (CEPT) (PubMed:31474098). The biosynthesis initiates from condensation of acetate and malonate units catalyzed by the non-reducing PKS pks8/GME11356. Pks8/GME11356 lacks a thioesterase (TE) domain, which is important to the cyclizing of the third ring of atrochrysone carboxylic acid, and the esterase GME11355 might play the role of TE and catalyzes the cyclization reaction of the C ring. The lactamase-like protein GME11357 (or other beta-lactamases in Pestalotiopsis microspora) probably hydrolyzes the thioester bond between the ACP of pks8/GME11356 and the intermediate to release atrochrysone carboxylic acid, which is spontaneously dehydrates to form endocrocin anthrone. Endocrocin anthrone is further converted to emodin via the endocrocin intermediate. Emodin is then oxidized by several enzymes such as the Baeyer-Villiger oxidase GME11358, the oxidoreductase GME11367, the short chain dehydrogenase/reductase GME11373, as well as by other oxidoreductases from the cluster, to modify the A and C rings and open the B ring, and finally yield monodictyphenone. The prenyltransferase GME11375 may catalyze the addition reaction between the C5 side chains and the carbon bone of dibenzodioxocinones. The remaining biochemical reactions to the final product dibenzodioxocinones should be methylation catalyzed by methyltransferase GME11366 and reduction and lactonization reaction catalyzed by a series of oxidordeuctases (Probable).</text>
</comment>
<comment type="pathway">
    <text evidence="8">Secondary metabolite biosynthesis.</text>
</comment>
<comment type="induction">
    <text evidence="5">The expression of the dibenzodioxocinones biosynthesis cluster is positively regulated by the transcription factor dibT.</text>
</comment>
<comment type="similarity">
    <text evidence="7">Belongs to the short-chain dehydrogenases/reductases (SDR) family.</text>
</comment>
<evidence type="ECO:0000250" key="1">
    <source>
        <dbReference type="UniProtKB" id="L0E2Z4"/>
    </source>
</evidence>
<evidence type="ECO:0000250" key="2">
    <source>
        <dbReference type="UniProtKB" id="O93868"/>
    </source>
</evidence>
<evidence type="ECO:0000255" key="3">
    <source>
        <dbReference type="PROSITE-ProRule" id="PRU10001"/>
    </source>
</evidence>
<evidence type="ECO:0000269" key="4">
    <source>
    </source>
</evidence>
<evidence type="ECO:0000269" key="5">
    <source>
    </source>
</evidence>
<evidence type="ECO:0000303" key="6">
    <source>
    </source>
</evidence>
<evidence type="ECO:0000305" key="7"/>
<evidence type="ECO:0000305" key="8">
    <source>
    </source>
</evidence>
<protein>
    <recommendedName>
        <fullName evidence="6">Short-chain dehydrogenase/reductase GME11373</fullName>
        <ecNumber evidence="8">1.1.1.-</ecNumber>
    </recommendedName>
    <alternativeName>
        <fullName evidence="6">Dibenzodioxocinones biosynthesis cluster protein GME11373</fullName>
    </alternativeName>
</protein>
<gene>
    <name evidence="6" type="ORF">GME11373</name>
</gene>
<name>GME73_PESMI</name>
<sequence>MSSATQHIPFRLDGKVALVTGSGRGIGAAMATELGRAGAKVIVNYANSKESAEKLVEEIKKLGTDAVALQADVSKVPQTVRLFDEAIKVWGRLDIVCSNAGVVSFGHLEEVTEEEFDRVFTINTRGQFFVAREAYKHLNEGGRIIMMSSNTAHAFAVPRHSLYSGSKGAIESFVKVLAIDCGKKKITVNAVAPGGTVTDMFHDVSQHYIPGGEKYTAEERQQMAAHASPLVRNGYPVDIANAVVFLASKEGEWVNGKTIGVDGGS</sequence>
<dbReference type="EC" id="1.1.1.-" evidence="8"/>
<dbReference type="EMBL" id="MK590992">
    <property type="protein sequence ID" value="QED41504.1"/>
    <property type="molecule type" value="mRNA"/>
</dbReference>
<dbReference type="SMR" id="A0A5B8YU81"/>
<dbReference type="GO" id="GO:0016491">
    <property type="term" value="F:oxidoreductase activity"/>
    <property type="evidence" value="ECO:0007669"/>
    <property type="project" value="UniProtKB-KW"/>
</dbReference>
<dbReference type="CDD" id="cd05362">
    <property type="entry name" value="THN_reductase-like_SDR_c"/>
    <property type="match status" value="1"/>
</dbReference>
<dbReference type="FunFam" id="3.40.50.720:FF:000084">
    <property type="entry name" value="Short-chain dehydrogenase reductase"/>
    <property type="match status" value="1"/>
</dbReference>
<dbReference type="Gene3D" id="3.40.50.720">
    <property type="entry name" value="NAD(P)-binding Rossmann-like Domain"/>
    <property type="match status" value="1"/>
</dbReference>
<dbReference type="InterPro" id="IPR036291">
    <property type="entry name" value="NAD(P)-bd_dom_sf"/>
</dbReference>
<dbReference type="InterPro" id="IPR020904">
    <property type="entry name" value="Sc_DH/Rdtase_CS"/>
</dbReference>
<dbReference type="InterPro" id="IPR002347">
    <property type="entry name" value="SDR_fam"/>
</dbReference>
<dbReference type="PANTHER" id="PTHR43639">
    <property type="entry name" value="OXIDOREDUCTASE, SHORT-CHAIN DEHYDROGENASE/REDUCTASE FAMILY (AFU_ORTHOLOGUE AFUA_5G02870)"/>
    <property type="match status" value="1"/>
</dbReference>
<dbReference type="PANTHER" id="PTHR43639:SF1">
    <property type="entry name" value="SHORT-CHAIN DEHYDROGENASE_REDUCTASE FAMILY PROTEIN"/>
    <property type="match status" value="1"/>
</dbReference>
<dbReference type="Pfam" id="PF13561">
    <property type="entry name" value="adh_short_C2"/>
    <property type="match status" value="1"/>
</dbReference>
<dbReference type="PRINTS" id="PR00081">
    <property type="entry name" value="GDHRDH"/>
</dbReference>
<dbReference type="PRINTS" id="PR00080">
    <property type="entry name" value="SDRFAMILY"/>
</dbReference>
<dbReference type="SMART" id="SM00822">
    <property type="entry name" value="PKS_KR"/>
    <property type="match status" value="1"/>
</dbReference>
<dbReference type="SUPFAM" id="SSF51735">
    <property type="entry name" value="NAD(P)-binding Rossmann-fold domains"/>
    <property type="match status" value="1"/>
</dbReference>
<dbReference type="PROSITE" id="PS00061">
    <property type="entry name" value="ADH_SHORT"/>
    <property type="match status" value="1"/>
</dbReference>
<accession>A0A5B8YU81</accession>
<keyword id="KW-0521">NADP</keyword>
<keyword id="KW-0560">Oxidoreductase</keyword>
<proteinExistence type="evidence at transcript level"/>
<reference key="1">
    <citation type="journal article" date="2019" name="J. Microbiol. Biotechnol.">
        <title>A gene cluster for the biosynthesis of dibenzodioxocinons in the endophyte Pestalotiopsis microspora, a taxol producer.</title>
        <authorList>
            <person name="Liu Y."/>
            <person name="Chen L."/>
            <person name="Xie Q."/>
            <person name="Yu X."/>
            <person name="Duan A."/>
            <person name="Lin Y."/>
            <person name="Xiang B."/>
            <person name="Hao X."/>
            <person name="Chen W."/>
            <person name="Zhu X."/>
        </authorList>
    </citation>
    <scope>NUCLEOTIDE SEQUENCE [MRNA]</scope>
    <scope>FUNCTION</scope>
    <scope>PATHWAY</scope>
    <source>
        <strain>NK17</strain>
    </source>
</reference>
<reference key="2">
    <citation type="journal article" date="2022" name="Microbiol. Res.">
        <title>Acquiring novel chemicals by overexpression of a transcription factor DibT in the dibenzodioxocinone biosynthetic cluster in Pestalotiopsis microspora.</title>
        <authorList>
            <person name="Liu Y."/>
            <person name="Fu Y."/>
            <person name="Zhou M."/>
            <person name="Hao X."/>
            <person name="Zhang P."/>
            <person name="Zhu X."/>
        </authorList>
    </citation>
    <scope>INDUCTION</scope>
</reference>
<organism>
    <name type="scientific">Pestalotiopsis microspora</name>
    <dbReference type="NCBI Taxonomy" id="85828"/>
    <lineage>
        <taxon>Eukaryota</taxon>
        <taxon>Fungi</taxon>
        <taxon>Dikarya</taxon>
        <taxon>Ascomycota</taxon>
        <taxon>Pezizomycotina</taxon>
        <taxon>Sordariomycetes</taxon>
        <taxon>Xylariomycetidae</taxon>
        <taxon>Amphisphaeriales</taxon>
        <taxon>Sporocadaceae</taxon>
        <taxon>Pestalotiopsis</taxon>
    </lineage>
</organism>